<name>GPDA_ENTFA</name>
<reference key="1">
    <citation type="journal article" date="2003" name="Science">
        <title>Role of mobile DNA in the evolution of vancomycin-resistant Enterococcus faecalis.</title>
        <authorList>
            <person name="Paulsen I.T."/>
            <person name="Banerjei L."/>
            <person name="Myers G.S.A."/>
            <person name="Nelson K.E."/>
            <person name="Seshadri R."/>
            <person name="Read T.D."/>
            <person name="Fouts D.E."/>
            <person name="Eisen J.A."/>
            <person name="Gill S.R."/>
            <person name="Heidelberg J.F."/>
            <person name="Tettelin H."/>
            <person name="Dodson R.J."/>
            <person name="Umayam L.A."/>
            <person name="Brinkac L.M."/>
            <person name="Beanan M.J."/>
            <person name="Daugherty S.C."/>
            <person name="DeBoy R.T."/>
            <person name="Durkin S.A."/>
            <person name="Kolonay J.F."/>
            <person name="Madupu R."/>
            <person name="Nelson W.C."/>
            <person name="Vamathevan J.J."/>
            <person name="Tran B."/>
            <person name="Upton J."/>
            <person name="Hansen T."/>
            <person name="Shetty J."/>
            <person name="Khouri H.M."/>
            <person name="Utterback T.R."/>
            <person name="Radune D."/>
            <person name="Ketchum K.A."/>
            <person name="Dougherty B.A."/>
            <person name="Fraser C.M."/>
        </authorList>
    </citation>
    <scope>NUCLEOTIDE SEQUENCE [LARGE SCALE GENOMIC DNA]</scope>
    <source>
        <strain>ATCC 700802 / V583</strain>
    </source>
</reference>
<protein>
    <recommendedName>
        <fullName evidence="1">Glycerol-3-phosphate dehydrogenase [NAD(P)+]</fullName>
        <ecNumber evidence="1">1.1.1.94</ecNumber>
    </recommendedName>
    <alternativeName>
        <fullName evidence="1">NAD(P)(+)-dependent glycerol-3-phosphate dehydrogenase</fullName>
    </alternativeName>
    <alternativeName>
        <fullName evidence="1">NAD(P)H-dependent dihydroxyacetone-phosphate reductase</fullName>
    </alternativeName>
</protein>
<gene>
    <name evidence="1" type="primary">gpsA</name>
    <name type="ordered locus">EF_1747</name>
</gene>
<feature type="chain" id="PRO_0000137960" description="Glycerol-3-phosphate dehydrogenase [NAD(P)+]">
    <location>
        <begin position="1"/>
        <end position="340"/>
    </location>
</feature>
<feature type="active site" description="Proton acceptor" evidence="1">
    <location>
        <position position="193"/>
    </location>
</feature>
<feature type="binding site" evidence="1">
    <location>
        <position position="12"/>
    </location>
    <ligand>
        <name>NADPH</name>
        <dbReference type="ChEBI" id="CHEBI:57783"/>
    </ligand>
</feature>
<feature type="binding site" evidence="1">
    <location>
        <position position="13"/>
    </location>
    <ligand>
        <name>NADPH</name>
        <dbReference type="ChEBI" id="CHEBI:57783"/>
    </ligand>
</feature>
<feature type="binding site" evidence="1">
    <location>
        <position position="34"/>
    </location>
    <ligand>
        <name>NADPH</name>
        <dbReference type="ChEBI" id="CHEBI:57783"/>
    </ligand>
</feature>
<feature type="binding site" evidence="1">
    <location>
        <position position="107"/>
    </location>
    <ligand>
        <name>NADPH</name>
        <dbReference type="ChEBI" id="CHEBI:57783"/>
    </ligand>
</feature>
<feature type="binding site" evidence="1">
    <location>
        <position position="107"/>
    </location>
    <ligand>
        <name>sn-glycerol 3-phosphate</name>
        <dbReference type="ChEBI" id="CHEBI:57597"/>
    </ligand>
</feature>
<feature type="binding site" evidence="1">
    <location>
        <position position="138"/>
    </location>
    <ligand>
        <name>sn-glycerol 3-phosphate</name>
        <dbReference type="ChEBI" id="CHEBI:57597"/>
    </ligand>
</feature>
<feature type="binding site" evidence="1">
    <location>
        <position position="140"/>
    </location>
    <ligand>
        <name>sn-glycerol 3-phosphate</name>
        <dbReference type="ChEBI" id="CHEBI:57597"/>
    </ligand>
</feature>
<feature type="binding site" evidence="1">
    <location>
        <position position="142"/>
    </location>
    <ligand>
        <name>NADPH</name>
        <dbReference type="ChEBI" id="CHEBI:57783"/>
    </ligand>
</feature>
<feature type="binding site" evidence="1">
    <location>
        <position position="193"/>
    </location>
    <ligand>
        <name>sn-glycerol 3-phosphate</name>
        <dbReference type="ChEBI" id="CHEBI:57597"/>
    </ligand>
</feature>
<feature type="binding site" evidence="1">
    <location>
        <position position="246"/>
    </location>
    <ligand>
        <name>sn-glycerol 3-phosphate</name>
        <dbReference type="ChEBI" id="CHEBI:57597"/>
    </ligand>
</feature>
<feature type="binding site" evidence="1">
    <location>
        <position position="256"/>
    </location>
    <ligand>
        <name>sn-glycerol 3-phosphate</name>
        <dbReference type="ChEBI" id="CHEBI:57597"/>
    </ligand>
</feature>
<feature type="binding site" evidence="1">
    <location>
        <position position="257"/>
    </location>
    <ligand>
        <name>NADPH</name>
        <dbReference type="ChEBI" id="CHEBI:57783"/>
    </ligand>
</feature>
<feature type="binding site" evidence="1">
    <location>
        <position position="257"/>
    </location>
    <ligand>
        <name>sn-glycerol 3-phosphate</name>
        <dbReference type="ChEBI" id="CHEBI:57597"/>
    </ligand>
</feature>
<feature type="binding site" evidence="1">
    <location>
        <position position="258"/>
    </location>
    <ligand>
        <name>sn-glycerol 3-phosphate</name>
        <dbReference type="ChEBI" id="CHEBI:57597"/>
    </ligand>
</feature>
<feature type="binding site" evidence="1">
    <location>
        <position position="281"/>
    </location>
    <ligand>
        <name>NADPH</name>
        <dbReference type="ChEBI" id="CHEBI:57783"/>
    </ligand>
</feature>
<feature type="binding site" evidence="1">
    <location>
        <position position="283"/>
    </location>
    <ligand>
        <name>NADPH</name>
        <dbReference type="ChEBI" id="CHEBI:57783"/>
    </ligand>
</feature>
<sequence length="340" mass="36683">MKQKVAVLGPGSWGTALAQVLAENGHEVCIWGNKPEQIDEINTKHTNKHYLPELILPTSIQATTDLATALVDVDAVLFVVPTKAIRSVAQEVAQHLKTKPIIIHASKGLEQGTHKRISEVIAEEIPAEKRQGIVVLSGPSHAEEVAVHDITTITAASENLADAVYVQELFMNDYFRIYTNDDVIGVETGAALKNIIALGAGAIHGLGFGDNAKAAIMTRGLAEISRLGVAMGANPLTFIGLSGVGDLIVTCTSVHSRNWRAGNLLGKGHKLDEVLENMGMIVEGVSTTKAAYELAQQLEVEMPITETIYNVLYNDEDVQQAAKEIMLRDGKTENEFTLDF</sequence>
<proteinExistence type="inferred from homology"/>
<evidence type="ECO:0000255" key="1">
    <source>
        <dbReference type="HAMAP-Rule" id="MF_00394"/>
    </source>
</evidence>
<dbReference type="EC" id="1.1.1.94" evidence="1"/>
<dbReference type="EMBL" id="AE016830">
    <property type="protein sequence ID" value="AAO81520.1"/>
    <property type="molecule type" value="Genomic_DNA"/>
</dbReference>
<dbReference type="RefSeq" id="NP_815450.1">
    <property type="nucleotide sequence ID" value="NC_004668.1"/>
</dbReference>
<dbReference type="RefSeq" id="WP_002357312.1">
    <property type="nucleotide sequence ID" value="NZ_KE136528.1"/>
</dbReference>
<dbReference type="SMR" id="Q834C1"/>
<dbReference type="STRING" id="226185.EF_1747"/>
<dbReference type="EnsemblBacteria" id="AAO81520">
    <property type="protein sequence ID" value="AAO81520"/>
    <property type="gene ID" value="EF_1747"/>
</dbReference>
<dbReference type="KEGG" id="efa:EF1747"/>
<dbReference type="PATRIC" id="fig|226185.45.peg.1768"/>
<dbReference type="eggNOG" id="COG0240">
    <property type="taxonomic scope" value="Bacteria"/>
</dbReference>
<dbReference type="HOGENOM" id="CLU_033449_0_2_9"/>
<dbReference type="UniPathway" id="UPA00940"/>
<dbReference type="Proteomes" id="UP000001415">
    <property type="component" value="Chromosome"/>
</dbReference>
<dbReference type="GO" id="GO:0005829">
    <property type="term" value="C:cytosol"/>
    <property type="evidence" value="ECO:0007669"/>
    <property type="project" value="TreeGrafter"/>
</dbReference>
<dbReference type="GO" id="GO:0047952">
    <property type="term" value="F:glycerol-3-phosphate dehydrogenase [NAD(P)+] activity"/>
    <property type="evidence" value="ECO:0007669"/>
    <property type="project" value="UniProtKB-UniRule"/>
</dbReference>
<dbReference type="GO" id="GO:0051287">
    <property type="term" value="F:NAD binding"/>
    <property type="evidence" value="ECO:0007669"/>
    <property type="project" value="InterPro"/>
</dbReference>
<dbReference type="GO" id="GO:0005975">
    <property type="term" value="P:carbohydrate metabolic process"/>
    <property type="evidence" value="ECO:0007669"/>
    <property type="project" value="InterPro"/>
</dbReference>
<dbReference type="GO" id="GO:0046167">
    <property type="term" value="P:glycerol-3-phosphate biosynthetic process"/>
    <property type="evidence" value="ECO:0007669"/>
    <property type="project" value="UniProtKB-UniRule"/>
</dbReference>
<dbReference type="GO" id="GO:0046168">
    <property type="term" value="P:glycerol-3-phosphate catabolic process"/>
    <property type="evidence" value="ECO:0007669"/>
    <property type="project" value="InterPro"/>
</dbReference>
<dbReference type="GO" id="GO:0006650">
    <property type="term" value="P:glycerophospholipid metabolic process"/>
    <property type="evidence" value="ECO:0007669"/>
    <property type="project" value="UniProtKB-UniRule"/>
</dbReference>
<dbReference type="GO" id="GO:0008654">
    <property type="term" value="P:phospholipid biosynthetic process"/>
    <property type="evidence" value="ECO:0007669"/>
    <property type="project" value="UniProtKB-KW"/>
</dbReference>
<dbReference type="FunFam" id="1.10.1040.10:FF:000001">
    <property type="entry name" value="Glycerol-3-phosphate dehydrogenase [NAD(P)+]"/>
    <property type="match status" value="1"/>
</dbReference>
<dbReference type="FunFam" id="3.40.50.720:FF:000019">
    <property type="entry name" value="Glycerol-3-phosphate dehydrogenase [NAD(P)+]"/>
    <property type="match status" value="1"/>
</dbReference>
<dbReference type="Gene3D" id="1.10.1040.10">
    <property type="entry name" value="N-(1-d-carboxylethyl)-l-norvaline Dehydrogenase, domain 2"/>
    <property type="match status" value="1"/>
</dbReference>
<dbReference type="Gene3D" id="3.40.50.720">
    <property type="entry name" value="NAD(P)-binding Rossmann-like Domain"/>
    <property type="match status" value="1"/>
</dbReference>
<dbReference type="HAMAP" id="MF_00394">
    <property type="entry name" value="NAD_Glyc3P_dehydrog"/>
    <property type="match status" value="1"/>
</dbReference>
<dbReference type="InterPro" id="IPR008927">
    <property type="entry name" value="6-PGluconate_DH-like_C_sf"/>
</dbReference>
<dbReference type="InterPro" id="IPR013328">
    <property type="entry name" value="6PGD_dom2"/>
</dbReference>
<dbReference type="InterPro" id="IPR006168">
    <property type="entry name" value="G3P_DH_NAD-dep"/>
</dbReference>
<dbReference type="InterPro" id="IPR006109">
    <property type="entry name" value="G3P_DH_NAD-dep_C"/>
</dbReference>
<dbReference type="InterPro" id="IPR011128">
    <property type="entry name" value="G3P_DH_NAD-dep_N"/>
</dbReference>
<dbReference type="InterPro" id="IPR036291">
    <property type="entry name" value="NAD(P)-bd_dom_sf"/>
</dbReference>
<dbReference type="NCBIfam" id="NF000940">
    <property type="entry name" value="PRK00094.1-2"/>
    <property type="match status" value="1"/>
</dbReference>
<dbReference type="NCBIfam" id="NF000941">
    <property type="entry name" value="PRK00094.1-3"/>
    <property type="match status" value="1"/>
</dbReference>
<dbReference type="NCBIfam" id="NF000942">
    <property type="entry name" value="PRK00094.1-4"/>
    <property type="match status" value="1"/>
</dbReference>
<dbReference type="PANTHER" id="PTHR11728">
    <property type="entry name" value="GLYCEROL-3-PHOSPHATE DEHYDROGENASE"/>
    <property type="match status" value="1"/>
</dbReference>
<dbReference type="PANTHER" id="PTHR11728:SF1">
    <property type="entry name" value="GLYCEROL-3-PHOSPHATE DEHYDROGENASE [NAD(+)] 2, CHLOROPLASTIC"/>
    <property type="match status" value="1"/>
</dbReference>
<dbReference type="Pfam" id="PF07479">
    <property type="entry name" value="NAD_Gly3P_dh_C"/>
    <property type="match status" value="1"/>
</dbReference>
<dbReference type="Pfam" id="PF01210">
    <property type="entry name" value="NAD_Gly3P_dh_N"/>
    <property type="match status" value="1"/>
</dbReference>
<dbReference type="PIRSF" id="PIRSF000114">
    <property type="entry name" value="Glycerol-3-P_dh"/>
    <property type="match status" value="1"/>
</dbReference>
<dbReference type="PRINTS" id="PR00077">
    <property type="entry name" value="GPDHDRGNASE"/>
</dbReference>
<dbReference type="SUPFAM" id="SSF48179">
    <property type="entry name" value="6-phosphogluconate dehydrogenase C-terminal domain-like"/>
    <property type="match status" value="1"/>
</dbReference>
<dbReference type="SUPFAM" id="SSF51735">
    <property type="entry name" value="NAD(P)-binding Rossmann-fold domains"/>
    <property type="match status" value="1"/>
</dbReference>
<dbReference type="PROSITE" id="PS00957">
    <property type="entry name" value="NAD_G3PDH"/>
    <property type="match status" value="1"/>
</dbReference>
<accession>Q834C1</accession>
<keyword id="KW-0963">Cytoplasm</keyword>
<keyword id="KW-0444">Lipid biosynthesis</keyword>
<keyword id="KW-0443">Lipid metabolism</keyword>
<keyword id="KW-0520">NAD</keyword>
<keyword id="KW-0521">NADP</keyword>
<keyword id="KW-0547">Nucleotide-binding</keyword>
<keyword id="KW-0560">Oxidoreductase</keyword>
<keyword id="KW-0594">Phospholipid biosynthesis</keyword>
<keyword id="KW-1208">Phospholipid metabolism</keyword>
<keyword id="KW-1185">Reference proteome</keyword>
<organism>
    <name type="scientific">Enterococcus faecalis (strain ATCC 700802 / V583)</name>
    <dbReference type="NCBI Taxonomy" id="226185"/>
    <lineage>
        <taxon>Bacteria</taxon>
        <taxon>Bacillati</taxon>
        <taxon>Bacillota</taxon>
        <taxon>Bacilli</taxon>
        <taxon>Lactobacillales</taxon>
        <taxon>Enterococcaceae</taxon>
        <taxon>Enterococcus</taxon>
    </lineage>
</organism>
<comment type="function">
    <text evidence="1">Catalyzes the reduction of the glycolytic intermediate dihydroxyacetone phosphate (DHAP) to sn-glycerol 3-phosphate (G3P), the key precursor for phospholipid synthesis.</text>
</comment>
<comment type="catalytic activity">
    <reaction evidence="1">
        <text>sn-glycerol 3-phosphate + NAD(+) = dihydroxyacetone phosphate + NADH + H(+)</text>
        <dbReference type="Rhea" id="RHEA:11092"/>
        <dbReference type="ChEBI" id="CHEBI:15378"/>
        <dbReference type="ChEBI" id="CHEBI:57540"/>
        <dbReference type="ChEBI" id="CHEBI:57597"/>
        <dbReference type="ChEBI" id="CHEBI:57642"/>
        <dbReference type="ChEBI" id="CHEBI:57945"/>
        <dbReference type="EC" id="1.1.1.94"/>
    </reaction>
    <physiologicalReaction direction="right-to-left" evidence="1">
        <dbReference type="Rhea" id="RHEA:11094"/>
    </physiologicalReaction>
</comment>
<comment type="catalytic activity">
    <reaction evidence="1">
        <text>sn-glycerol 3-phosphate + NADP(+) = dihydroxyacetone phosphate + NADPH + H(+)</text>
        <dbReference type="Rhea" id="RHEA:11096"/>
        <dbReference type="ChEBI" id="CHEBI:15378"/>
        <dbReference type="ChEBI" id="CHEBI:57597"/>
        <dbReference type="ChEBI" id="CHEBI:57642"/>
        <dbReference type="ChEBI" id="CHEBI:57783"/>
        <dbReference type="ChEBI" id="CHEBI:58349"/>
        <dbReference type="EC" id="1.1.1.94"/>
    </reaction>
    <physiologicalReaction direction="right-to-left" evidence="1">
        <dbReference type="Rhea" id="RHEA:11098"/>
    </physiologicalReaction>
</comment>
<comment type="pathway">
    <text evidence="1">Membrane lipid metabolism; glycerophospholipid metabolism.</text>
</comment>
<comment type="subcellular location">
    <subcellularLocation>
        <location evidence="1">Cytoplasm</location>
    </subcellularLocation>
</comment>
<comment type="similarity">
    <text evidence="1">Belongs to the NAD-dependent glycerol-3-phosphate dehydrogenase family.</text>
</comment>